<reference key="1">
    <citation type="submission" date="2006-12" db="EMBL/GenBank/DDBJ databases">
        <title>Complete sequence of Halorhodospira halophila SL1.</title>
        <authorList>
            <consortium name="US DOE Joint Genome Institute"/>
            <person name="Copeland A."/>
            <person name="Lucas S."/>
            <person name="Lapidus A."/>
            <person name="Barry K."/>
            <person name="Detter J.C."/>
            <person name="Glavina del Rio T."/>
            <person name="Hammon N."/>
            <person name="Israni S."/>
            <person name="Dalin E."/>
            <person name="Tice H."/>
            <person name="Pitluck S."/>
            <person name="Saunders E."/>
            <person name="Brettin T."/>
            <person name="Bruce D."/>
            <person name="Han C."/>
            <person name="Tapia R."/>
            <person name="Schmutz J."/>
            <person name="Larimer F."/>
            <person name="Land M."/>
            <person name="Hauser L."/>
            <person name="Kyrpides N."/>
            <person name="Mikhailova N."/>
            <person name="Hoff W."/>
            <person name="Richardson P."/>
        </authorList>
    </citation>
    <scope>NUCLEOTIDE SEQUENCE [LARGE SCALE GENOMIC DNA]</scope>
    <source>
        <strain>DSM 244 / SL1</strain>
    </source>
</reference>
<comment type="function">
    <text evidence="1">Involved in peptide bond synthesis. Alleviates ribosome stalling that occurs when 3 or more consecutive Pro residues or the sequence PPG is present in a protein, possibly by augmenting the peptidyl transferase activity of the ribosome. Modification of Lys-34 is required for alleviation.</text>
</comment>
<comment type="pathway">
    <text evidence="1">Protein biosynthesis; polypeptide chain elongation.</text>
</comment>
<comment type="subcellular location">
    <subcellularLocation>
        <location evidence="1">Cytoplasm</location>
    </subcellularLocation>
</comment>
<comment type="PTM">
    <text evidence="1">May be beta-lysylated on the epsilon-amino group of Lys-34 by the combined action of EpmA and EpmB, and then hydroxylated on the C5 position of the same residue by EpmC (if this protein is present). Lysylation is critical for the stimulatory effect of EF-P on peptide-bond formation. The lysylation moiety may extend toward the peptidyltransferase center and stabilize the terminal 3-CCA end of the tRNA. Hydroxylation of the C5 position on Lys-34 may allow additional potential stabilizing hydrogen-bond interactions with the P-tRNA.</text>
</comment>
<comment type="similarity">
    <text evidence="1">Belongs to the elongation factor P family.</text>
</comment>
<feature type="chain" id="PRO_1000010759" description="Elongation factor P">
    <location>
        <begin position="1"/>
        <end position="189"/>
    </location>
</feature>
<feature type="modified residue" description="N6-(3,6-diaminohexanoyl)-5-hydroxylysine" evidence="1">
    <location>
        <position position="34"/>
    </location>
</feature>
<protein>
    <recommendedName>
        <fullName evidence="1">Elongation factor P</fullName>
        <shortName evidence="1">EF-P</shortName>
    </recommendedName>
</protein>
<dbReference type="EMBL" id="CP000544">
    <property type="protein sequence ID" value="ABM62743.1"/>
    <property type="molecule type" value="Genomic_DNA"/>
</dbReference>
<dbReference type="RefSeq" id="WP_011814765.1">
    <property type="nucleotide sequence ID" value="NC_008789.1"/>
</dbReference>
<dbReference type="SMR" id="A1WYI1"/>
<dbReference type="STRING" id="349124.Hhal_1979"/>
<dbReference type="KEGG" id="hha:Hhal_1979"/>
<dbReference type="eggNOG" id="COG0231">
    <property type="taxonomic scope" value="Bacteria"/>
</dbReference>
<dbReference type="HOGENOM" id="CLU_074944_0_0_6"/>
<dbReference type="OrthoDB" id="9801844at2"/>
<dbReference type="UniPathway" id="UPA00345"/>
<dbReference type="Proteomes" id="UP000000647">
    <property type="component" value="Chromosome"/>
</dbReference>
<dbReference type="GO" id="GO:0005737">
    <property type="term" value="C:cytoplasm"/>
    <property type="evidence" value="ECO:0007669"/>
    <property type="project" value="UniProtKB-SubCell"/>
</dbReference>
<dbReference type="GO" id="GO:0003746">
    <property type="term" value="F:translation elongation factor activity"/>
    <property type="evidence" value="ECO:0007669"/>
    <property type="project" value="UniProtKB-UniRule"/>
</dbReference>
<dbReference type="GO" id="GO:0043043">
    <property type="term" value="P:peptide biosynthetic process"/>
    <property type="evidence" value="ECO:0007669"/>
    <property type="project" value="InterPro"/>
</dbReference>
<dbReference type="CDD" id="cd04470">
    <property type="entry name" value="S1_EF-P_repeat_1"/>
    <property type="match status" value="1"/>
</dbReference>
<dbReference type="CDD" id="cd05794">
    <property type="entry name" value="S1_EF-P_repeat_2"/>
    <property type="match status" value="1"/>
</dbReference>
<dbReference type="FunFam" id="2.30.30.30:FF:000003">
    <property type="entry name" value="Elongation factor P"/>
    <property type="match status" value="1"/>
</dbReference>
<dbReference type="FunFam" id="2.40.50.140:FF:000004">
    <property type="entry name" value="Elongation factor P"/>
    <property type="match status" value="1"/>
</dbReference>
<dbReference type="FunFam" id="2.40.50.140:FF:000009">
    <property type="entry name" value="Elongation factor P"/>
    <property type="match status" value="1"/>
</dbReference>
<dbReference type="Gene3D" id="2.30.30.30">
    <property type="match status" value="1"/>
</dbReference>
<dbReference type="Gene3D" id="2.40.50.140">
    <property type="entry name" value="Nucleic acid-binding proteins"/>
    <property type="match status" value="2"/>
</dbReference>
<dbReference type="HAMAP" id="MF_00141">
    <property type="entry name" value="EF_P"/>
    <property type="match status" value="1"/>
</dbReference>
<dbReference type="InterPro" id="IPR015365">
    <property type="entry name" value="Elong-fact-P_C"/>
</dbReference>
<dbReference type="InterPro" id="IPR012340">
    <property type="entry name" value="NA-bd_OB-fold"/>
</dbReference>
<dbReference type="InterPro" id="IPR014722">
    <property type="entry name" value="Rib_uL2_dom2"/>
</dbReference>
<dbReference type="InterPro" id="IPR020599">
    <property type="entry name" value="Transl_elong_fac_P/YeiP"/>
</dbReference>
<dbReference type="InterPro" id="IPR013185">
    <property type="entry name" value="Transl_elong_KOW-like"/>
</dbReference>
<dbReference type="InterPro" id="IPR001059">
    <property type="entry name" value="Transl_elong_P/YeiP_cen"/>
</dbReference>
<dbReference type="InterPro" id="IPR013852">
    <property type="entry name" value="Transl_elong_P/YeiP_CS"/>
</dbReference>
<dbReference type="InterPro" id="IPR011768">
    <property type="entry name" value="Transl_elongation_fac_P"/>
</dbReference>
<dbReference type="InterPro" id="IPR008991">
    <property type="entry name" value="Translation_prot_SH3-like_sf"/>
</dbReference>
<dbReference type="NCBIfam" id="TIGR00038">
    <property type="entry name" value="efp"/>
    <property type="match status" value="1"/>
</dbReference>
<dbReference type="NCBIfam" id="NF001810">
    <property type="entry name" value="PRK00529.1"/>
    <property type="match status" value="1"/>
</dbReference>
<dbReference type="PANTHER" id="PTHR30053">
    <property type="entry name" value="ELONGATION FACTOR P"/>
    <property type="match status" value="1"/>
</dbReference>
<dbReference type="PANTHER" id="PTHR30053:SF12">
    <property type="entry name" value="ELONGATION FACTOR P (EF-P) FAMILY PROTEIN"/>
    <property type="match status" value="1"/>
</dbReference>
<dbReference type="Pfam" id="PF01132">
    <property type="entry name" value="EFP"/>
    <property type="match status" value="1"/>
</dbReference>
<dbReference type="Pfam" id="PF08207">
    <property type="entry name" value="EFP_N"/>
    <property type="match status" value="1"/>
</dbReference>
<dbReference type="Pfam" id="PF09285">
    <property type="entry name" value="Elong-fact-P_C"/>
    <property type="match status" value="1"/>
</dbReference>
<dbReference type="PIRSF" id="PIRSF005901">
    <property type="entry name" value="EF-P"/>
    <property type="match status" value="1"/>
</dbReference>
<dbReference type="SMART" id="SM01185">
    <property type="entry name" value="EFP"/>
    <property type="match status" value="1"/>
</dbReference>
<dbReference type="SMART" id="SM00841">
    <property type="entry name" value="Elong-fact-P_C"/>
    <property type="match status" value="1"/>
</dbReference>
<dbReference type="SUPFAM" id="SSF50249">
    <property type="entry name" value="Nucleic acid-binding proteins"/>
    <property type="match status" value="2"/>
</dbReference>
<dbReference type="SUPFAM" id="SSF50104">
    <property type="entry name" value="Translation proteins SH3-like domain"/>
    <property type="match status" value="1"/>
</dbReference>
<dbReference type="PROSITE" id="PS01275">
    <property type="entry name" value="EFP"/>
    <property type="match status" value="1"/>
</dbReference>
<keyword id="KW-0963">Cytoplasm</keyword>
<keyword id="KW-0251">Elongation factor</keyword>
<keyword id="KW-0379">Hydroxylation</keyword>
<keyword id="KW-0648">Protein biosynthesis</keyword>
<keyword id="KW-1185">Reference proteome</keyword>
<sequence length="189" mass="21043">MATYSTNEFKGGLKIMLDGDPFTIVENEFVKPGKGQAFNRVKLRNLKTNRVVEKTFKSGESVEAADVMETELQYLYNDGEFWYFMDPTSFEQKAAPSSAVGDAANWIKEQDTCTVILWNDTPLQVEAPNFVDLKVIETDPGVRGDTSSGGTKPAKLETGATVRVPLFIEEGEVLRVDTRKAEYVSRAKD</sequence>
<proteinExistence type="inferred from homology"/>
<name>EFP_HALHL</name>
<organism>
    <name type="scientific">Halorhodospira halophila (strain DSM 244 / SL1)</name>
    <name type="common">Ectothiorhodospira halophila (strain DSM 244 / SL1)</name>
    <dbReference type="NCBI Taxonomy" id="349124"/>
    <lineage>
        <taxon>Bacteria</taxon>
        <taxon>Pseudomonadati</taxon>
        <taxon>Pseudomonadota</taxon>
        <taxon>Gammaproteobacteria</taxon>
        <taxon>Chromatiales</taxon>
        <taxon>Ectothiorhodospiraceae</taxon>
        <taxon>Halorhodospira</taxon>
    </lineage>
</organism>
<gene>
    <name evidence="1" type="primary">efp</name>
    <name type="ordered locus">Hhal_1979</name>
</gene>
<accession>A1WYI1</accession>
<evidence type="ECO:0000255" key="1">
    <source>
        <dbReference type="HAMAP-Rule" id="MF_00141"/>
    </source>
</evidence>